<proteinExistence type="inferred from homology"/>
<sequence length="132" mass="15647">MDSRTGENITAHQAENSVFIWEVPNPLYFKIMRVEDPAYTRTRIYHIQIRFNHNLRKALDLHKAFLNFQVWTTSIQASGTTYLNRFRLLVLLYLHRLGVIGINNVIRAVQFATNKSYVNTVLENHDIKYKFY</sequence>
<protein>
    <recommendedName>
        <fullName>Replication enhancer protein</fullName>
        <shortName>REn</shortName>
    </recommendedName>
    <alternativeName>
        <fullName>15.6 kDa protein</fullName>
    </alternativeName>
    <alternativeName>
        <fullName>Protein AC3</fullName>
    </alternativeName>
    <alternativeName>
        <fullName>Protein AL3</fullName>
    </alternativeName>
</protein>
<gene>
    <name type="ORF">AC3</name>
    <name type="ORF">AL3</name>
</gene>
<reference key="1">
    <citation type="journal article" date="1985" name="Proc. Natl. Acad. Sci. U.S.A.">
        <title>Nucleotide sequence of bean golden mosaic virus and a model for gene regulation in geminiviruses.</title>
        <authorList>
            <person name="Howarth A.J."/>
            <person name="Caton J."/>
            <person name="Bossert M."/>
            <person name="Goodman R.M."/>
        </authorList>
    </citation>
    <scope>NUCLEOTIDE SEQUENCE [GENOMIC DNA]</scope>
</reference>
<dbReference type="EMBL" id="M10070">
    <property type="protein sequence ID" value="AAA46320.1"/>
    <property type="molecule type" value="Genomic_DNA"/>
</dbReference>
<dbReference type="Proteomes" id="UP000006572">
    <property type="component" value="Genome"/>
</dbReference>
<dbReference type="GO" id="GO:0016032">
    <property type="term" value="P:viral process"/>
    <property type="evidence" value="ECO:0007669"/>
    <property type="project" value="InterPro"/>
</dbReference>
<dbReference type="InterPro" id="IPR000657">
    <property type="entry name" value="Gemini_AL3"/>
</dbReference>
<dbReference type="Pfam" id="PF01407">
    <property type="entry name" value="Gemini_AL3"/>
    <property type="match status" value="1"/>
</dbReference>
<dbReference type="PRINTS" id="PR00231">
    <property type="entry name" value="GEMCOATAL3"/>
</dbReference>
<keyword id="KW-0945">Host-virus interaction</keyword>
<keyword id="KW-1185">Reference proteome</keyword>
<name>REN_BGYMV</name>
<feature type="chain" id="PRO_0000222237" description="Replication enhancer protein">
    <location>
        <begin position="1"/>
        <end position="132"/>
    </location>
</feature>
<evidence type="ECO:0000250" key="1"/>
<evidence type="ECO:0000305" key="2"/>
<accession>P0CK35</accession>
<accession>P05173</accession>
<accession>Q67581</accession>
<organismHost>
    <name type="scientific">Macroptilium lathyroides</name>
    <dbReference type="NCBI Taxonomy" id="260885"/>
</organismHost>
<organismHost>
    <name type="scientific">Malvastrum coromandelianum</name>
    <dbReference type="NCBI Taxonomy" id="108453"/>
</organismHost>
<organismHost>
    <name type="scientific">Phaseolus lunatus</name>
    <name type="common">Lima bean</name>
    <name type="synonym">Phaseolus limensis</name>
    <dbReference type="NCBI Taxonomy" id="3884"/>
</organismHost>
<organismHost>
    <name type="scientific">Phaseolus vulgaris</name>
    <name type="common">Kidney bean</name>
    <name type="synonym">French bean</name>
    <dbReference type="NCBI Taxonomy" id="3885"/>
</organismHost>
<organism>
    <name type="scientific">Bean golden yellow mosaic virus (isolate Puerto Rico)</name>
    <name type="common">BGYMV</name>
    <name type="synonym">Bean golden mosaic virus (isolate Puerto Rico)</name>
    <dbReference type="NCBI Taxonomy" id="222448"/>
    <lineage>
        <taxon>Viruses</taxon>
        <taxon>Monodnaviria</taxon>
        <taxon>Shotokuvirae</taxon>
        <taxon>Cressdnaviricota</taxon>
        <taxon>Repensiviricetes</taxon>
        <taxon>Geplafuvirales</taxon>
        <taxon>Geminiviridae</taxon>
        <taxon>Begomovirus</taxon>
        <taxon>Bean golden yellow mosaic virus</taxon>
    </lineage>
</organism>
<comment type="function">
    <text evidence="1">Increases viral DNA accumulation. Enhances infectivity and symptom expression (By similarity).</text>
</comment>
<comment type="subunit">
    <text evidence="1">Homooligomer. Interacts with the replication-associated protein (REP). Interacts with host proliferating cell nuclear antigen (PCNA). Interacts with host retinoblastoma-related protein 1 (RBR1), and may thereby deregulate the host cell cycle. Oligomerization and interaction with PCNA are necessary for optimal replication enhancement (By similarity).</text>
</comment>
<comment type="similarity">
    <text evidence="2">Belongs to the geminiviridae replication enhancer protein family.</text>
</comment>